<evidence type="ECO:0000255" key="1">
    <source>
        <dbReference type="HAMAP-Rule" id="MF_00394"/>
    </source>
</evidence>
<evidence type="ECO:0000305" key="2"/>
<feature type="chain" id="PRO_0000255349" description="Glycerol-3-phosphate dehydrogenase [NAD(P)+]">
    <location>
        <begin position="1"/>
        <end position="431"/>
    </location>
</feature>
<feature type="active site" description="Proton acceptor" evidence="1">
    <location>
        <position position="256"/>
    </location>
</feature>
<feature type="binding site" evidence="1">
    <location>
        <position position="79"/>
    </location>
    <ligand>
        <name>NADPH</name>
        <dbReference type="ChEBI" id="CHEBI:57783"/>
    </ligand>
</feature>
<feature type="binding site" evidence="1">
    <location>
        <position position="80"/>
    </location>
    <ligand>
        <name>NADPH</name>
        <dbReference type="ChEBI" id="CHEBI:57783"/>
    </ligand>
</feature>
<feature type="binding site" evidence="1">
    <location>
        <position position="100"/>
    </location>
    <ligand>
        <name>NADPH</name>
        <dbReference type="ChEBI" id="CHEBI:57783"/>
    </ligand>
</feature>
<feature type="binding site" evidence="1">
    <location>
        <position position="173"/>
    </location>
    <ligand>
        <name>NADPH</name>
        <dbReference type="ChEBI" id="CHEBI:57783"/>
    </ligand>
</feature>
<feature type="binding site" evidence="1">
    <location>
        <position position="173"/>
    </location>
    <ligand>
        <name>sn-glycerol 3-phosphate</name>
        <dbReference type="ChEBI" id="CHEBI:57597"/>
    </ligand>
</feature>
<feature type="binding site" evidence="1">
    <location>
        <position position="201"/>
    </location>
    <ligand>
        <name>sn-glycerol 3-phosphate</name>
        <dbReference type="ChEBI" id="CHEBI:57597"/>
    </ligand>
</feature>
<feature type="binding site" evidence="1">
    <location>
        <position position="205"/>
    </location>
    <ligand>
        <name>NADPH</name>
        <dbReference type="ChEBI" id="CHEBI:57783"/>
    </ligand>
</feature>
<feature type="binding site" evidence="1">
    <location>
        <position position="256"/>
    </location>
    <ligand>
        <name>sn-glycerol 3-phosphate</name>
        <dbReference type="ChEBI" id="CHEBI:57597"/>
    </ligand>
</feature>
<feature type="binding site" evidence="1">
    <location>
        <position position="309"/>
    </location>
    <ligand>
        <name>sn-glycerol 3-phosphate</name>
        <dbReference type="ChEBI" id="CHEBI:57597"/>
    </ligand>
</feature>
<feature type="binding site" evidence="1">
    <location>
        <position position="319"/>
    </location>
    <ligand>
        <name>sn-glycerol 3-phosphate</name>
        <dbReference type="ChEBI" id="CHEBI:57597"/>
    </ligand>
</feature>
<feature type="binding site" evidence="1">
    <location>
        <position position="320"/>
    </location>
    <ligand>
        <name>NADPH</name>
        <dbReference type="ChEBI" id="CHEBI:57783"/>
    </ligand>
</feature>
<feature type="binding site" evidence="1">
    <location>
        <position position="320"/>
    </location>
    <ligand>
        <name>sn-glycerol 3-phosphate</name>
        <dbReference type="ChEBI" id="CHEBI:57597"/>
    </ligand>
</feature>
<feature type="binding site" evidence="1">
    <location>
        <position position="321"/>
    </location>
    <ligand>
        <name>sn-glycerol 3-phosphate</name>
        <dbReference type="ChEBI" id="CHEBI:57597"/>
    </ligand>
</feature>
<feature type="binding site" evidence="1">
    <location>
        <position position="346"/>
    </location>
    <ligand>
        <name>NADPH</name>
        <dbReference type="ChEBI" id="CHEBI:57783"/>
    </ligand>
</feature>
<accession>Q1QBS6</accession>
<dbReference type="EC" id="1.1.1.94" evidence="1"/>
<dbReference type="EMBL" id="CP000323">
    <property type="protein sequence ID" value="ABE74877.1"/>
    <property type="status" value="ALT_INIT"/>
    <property type="molecule type" value="Genomic_DNA"/>
</dbReference>
<dbReference type="RefSeq" id="WP_041753072.1">
    <property type="nucleotide sequence ID" value="NC_007969.1"/>
</dbReference>
<dbReference type="SMR" id="Q1QBS6"/>
<dbReference type="STRING" id="335284.Pcryo_1096"/>
<dbReference type="KEGG" id="pcr:Pcryo_1096"/>
<dbReference type="eggNOG" id="COG0240">
    <property type="taxonomic scope" value="Bacteria"/>
</dbReference>
<dbReference type="HOGENOM" id="CLU_033449_0_1_6"/>
<dbReference type="UniPathway" id="UPA00940"/>
<dbReference type="Proteomes" id="UP000002425">
    <property type="component" value="Chromosome"/>
</dbReference>
<dbReference type="GO" id="GO:0005829">
    <property type="term" value="C:cytosol"/>
    <property type="evidence" value="ECO:0007669"/>
    <property type="project" value="TreeGrafter"/>
</dbReference>
<dbReference type="GO" id="GO:0047952">
    <property type="term" value="F:glycerol-3-phosphate dehydrogenase [NAD(P)+] activity"/>
    <property type="evidence" value="ECO:0007669"/>
    <property type="project" value="UniProtKB-UniRule"/>
</dbReference>
<dbReference type="GO" id="GO:0051287">
    <property type="term" value="F:NAD binding"/>
    <property type="evidence" value="ECO:0007669"/>
    <property type="project" value="InterPro"/>
</dbReference>
<dbReference type="GO" id="GO:0005975">
    <property type="term" value="P:carbohydrate metabolic process"/>
    <property type="evidence" value="ECO:0007669"/>
    <property type="project" value="InterPro"/>
</dbReference>
<dbReference type="GO" id="GO:0046167">
    <property type="term" value="P:glycerol-3-phosphate biosynthetic process"/>
    <property type="evidence" value="ECO:0007669"/>
    <property type="project" value="UniProtKB-UniRule"/>
</dbReference>
<dbReference type="GO" id="GO:0046168">
    <property type="term" value="P:glycerol-3-phosphate catabolic process"/>
    <property type="evidence" value="ECO:0007669"/>
    <property type="project" value="InterPro"/>
</dbReference>
<dbReference type="GO" id="GO:0046474">
    <property type="term" value="P:glycerophospholipid biosynthetic process"/>
    <property type="evidence" value="ECO:0007669"/>
    <property type="project" value="TreeGrafter"/>
</dbReference>
<dbReference type="FunFam" id="1.10.1040.10:FF:000001">
    <property type="entry name" value="Glycerol-3-phosphate dehydrogenase [NAD(P)+]"/>
    <property type="match status" value="1"/>
</dbReference>
<dbReference type="FunFam" id="3.40.50.720:FF:000019">
    <property type="entry name" value="Glycerol-3-phosphate dehydrogenase [NAD(P)+]"/>
    <property type="match status" value="1"/>
</dbReference>
<dbReference type="Gene3D" id="1.10.1040.10">
    <property type="entry name" value="N-(1-d-carboxylethyl)-l-norvaline Dehydrogenase, domain 2"/>
    <property type="match status" value="1"/>
</dbReference>
<dbReference type="Gene3D" id="3.40.50.720">
    <property type="entry name" value="NAD(P)-binding Rossmann-like Domain"/>
    <property type="match status" value="1"/>
</dbReference>
<dbReference type="HAMAP" id="MF_00394">
    <property type="entry name" value="NAD_Glyc3P_dehydrog"/>
    <property type="match status" value="1"/>
</dbReference>
<dbReference type="InterPro" id="IPR008927">
    <property type="entry name" value="6-PGluconate_DH-like_C_sf"/>
</dbReference>
<dbReference type="InterPro" id="IPR013328">
    <property type="entry name" value="6PGD_dom2"/>
</dbReference>
<dbReference type="InterPro" id="IPR006168">
    <property type="entry name" value="G3P_DH_NAD-dep"/>
</dbReference>
<dbReference type="InterPro" id="IPR006109">
    <property type="entry name" value="G3P_DH_NAD-dep_C"/>
</dbReference>
<dbReference type="InterPro" id="IPR011128">
    <property type="entry name" value="G3P_DH_NAD-dep_N"/>
</dbReference>
<dbReference type="InterPro" id="IPR036291">
    <property type="entry name" value="NAD(P)-bd_dom_sf"/>
</dbReference>
<dbReference type="NCBIfam" id="NF000940">
    <property type="entry name" value="PRK00094.1-2"/>
    <property type="match status" value="1"/>
</dbReference>
<dbReference type="NCBIfam" id="NF000942">
    <property type="entry name" value="PRK00094.1-4"/>
    <property type="match status" value="1"/>
</dbReference>
<dbReference type="NCBIfam" id="NF000944">
    <property type="entry name" value="PRK00094.2-2"/>
    <property type="match status" value="1"/>
</dbReference>
<dbReference type="PANTHER" id="PTHR11728">
    <property type="entry name" value="GLYCEROL-3-PHOSPHATE DEHYDROGENASE"/>
    <property type="match status" value="1"/>
</dbReference>
<dbReference type="PANTHER" id="PTHR11728:SF1">
    <property type="entry name" value="GLYCEROL-3-PHOSPHATE DEHYDROGENASE [NAD(+)] 2, CHLOROPLASTIC"/>
    <property type="match status" value="1"/>
</dbReference>
<dbReference type="Pfam" id="PF07479">
    <property type="entry name" value="NAD_Gly3P_dh_C"/>
    <property type="match status" value="1"/>
</dbReference>
<dbReference type="Pfam" id="PF01210">
    <property type="entry name" value="NAD_Gly3P_dh_N"/>
    <property type="match status" value="1"/>
</dbReference>
<dbReference type="PRINTS" id="PR00077">
    <property type="entry name" value="GPDHDRGNASE"/>
</dbReference>
<dbReference type="SUPFAM" id="SSF48179">
    <property type="entry name" value="6-phosphogluconate dehydrogenase C-terminal domain-like"/>
    <property type="match status" value="1"/>
</dbReference>
<dbReference type="SUPFAM" id="SSF51735">
    <property type="entry name" value="NAD(P)-binding Rossmann-fold domains"/>
    <property type="match status" value="1"/>
</dbReference>
<dbReference type="PROSITE" id="PS00957">
    <property type="entry name" value="NAD_G3PDH"/>
    <property type="match status" value="1"/>
</dbReference>
<comment type="function">
    <text evidence="1">Catalyzes the reduction of the glycolytic intermediate dihydroxyacetone phosphate (DHAP) to sn-glycerol 3-phosphate (G3P), the key precursor for phospholipid synthesis.</text>
</comment>
<comment type="catalytic activity">
    <reaction evidence="1">
        <text>sn-glycerol 3-phosphate + NAD(+) = dihydroxyacetone phosphate + NADH + H(+)</text>
        <dbReference type="Rhea" id="RHEA:11092"/>
        <dbReference type="ChEBI" id="CHEBI:15378"/>
        <dbReference type="ChEBI" id="CHEBI:57540"/>
        <dbReference type="ChEBI" id="CHEBI:57597"/>
        <dbReference type="ChEBI" id="CHEBI:57642"/>
        <dbReference type="ChEBI" id="CHEBI:57945"/>
        <dbReference type="EC" id="1.1.1.94"/>
    </reaction>
    <physiologicalReaction direction="right-to-left" evidence="1">
        <dbReference type="Rhea" id="RHEA:11094"/>
    </physiologicalReaction>
</comment>
<comment type="catalytic activity">
    <reaction evidence="1">
        <text>sn-glycerol 3-phosphate + NADP(+) = dihydroxyacetone phosphate + NADPH + H(+)</text>
        <dbReference type="Rhea" id="RHEA:11096"/>
        <dbReference type="ChEBI" id="CHEBI:15378"/>
        <dbReference type="ChEBI" id="CHEBI:57597"/>
        <dbReference type="ChEBI" id="CHEBI:57642"/>
        <dbReference type="ChEBI" id="CHEBI:57783"/>
        <dbReference type="ChEBI" id="CHEBI:58349"/>
        <dbReference type="EC" id="1.1.1.94"/>
    </reaction>
    <physiologicalReaction direction="right-to-left" evidence="1">
        <dbReference type="Rhea" id="RHEA:11098"/>
    </physiologicalReaction>
</comment>
<comment type="pathway">
    <text evidence="1">Membrane lipid metabolism; glycerophospholipid metabolism.</text>
</comment>
<comment type="subcellular location">
    <subcellularLocation>
        <location evidence="1">Cytoplasm</location>
    </subcellularLocation>
</comment>
<comment type="similarity">
    <text evidence="1">Belongs to the NAD-dependent glycerol-3-phosphate dehydrogenase family.</text>
</comment>
<comment type="sequence caution" evidence="2">
    <conflict type="erroneous initiation">
        <sequence resource="EMBL-CDS" id="ABE74877"/>
    </conflict>
</comment>
<protein>
    <recommendedName>
        <fullName evidence="1">Glycerol-3-phosphate dehydrogenase [NAD(P)+]</fullName>
        <ecNumber evidence="1">1.1.1.94</ecNumber>
    </recommendedName>
    <alternativeName>
        <fullName evidence="1">NAD(P)(+)-dependent glycerol-3-phosphate dehydrogenase</fullName>
    </alternativeName>
    <alternativeName>
        <fullName evidence="1">NAD(P)H-dependent dihydroxyacetone-phosphate reductase</fullName>
    </alternativeName>
</protein>
<organism>
    <name type="scientific">Psychrobacter cryohalolentis (strain ATCC BAA-1226 / DSM 17306 / VKM B-2378 / K5)</name>
    <dbReference type="NCBI Taxonomy" id="335284"/>
    <lineage>
        <taxon>Bacteria</taxon>
        <taxon>Pseudomonadati</taxon>
        <taxon>Pseudomonadota</taxon>
        <taxon>Gammaproteobacteria</taxon>
        <taxon>Moraxellales</taxon>
        <taxon>Moraxellaceae</taxon>
        <taxon>Psychrobacter</taxon>
    </lineage>
</organism>
<keyword id="KW-0963">Cytoplasm</keyword>
<keyword id="KW-0444">Lipid biosynthesis</keyword>
<keyword id="KW-0443">Lipid metabolism</keyword>
<keyword id="KW-0520">NAD</keyword>
<keyword id="KW-0521">NADP</keyword>
<keyword id="KW-0547">Nucleotide-binding</keyword>
<keyword id="KW-0560">Oxidoreductase</keyword>
<keyword id="KW-0594">Phospholipid biosynthesis</keyword>
<keyword id="KW-1208">Phospholipid metabolism</keyword>
<name>GPDA_PSYCK</name>
<reference key="1">
    <citation type="submission" date="2006-03" db="EMBL/GenBank/DDBJ databases">
        <title>Complete sequence of chromosome of Psychrobacter cryohalolentis K5.</title>
        <authorList>
            <consortium name="US DOE Joint Genome Institute"/>
            <person name="Copeland A."/>
            <person name="Lucas S."/>
            <person name="Lapidus A."/>
            <person name="Barry K."/>
            <person name="Detter J.C."/>
            <person name="Glavina T."/>
            <person name="Hammon N."/>
            <person name="Israni S."/>
            <person name="Dalin E."/>
            <person name="Tice H."/>
            <person name="Pitluck S."/>
            <person name="Brettin T."/>
            <person name="Bruce D."/>
            <person name="Han C."/>
            <person name="Tapia R."/>
            <person name="Sims D.R."/>
            <person name="Gilna P."/>
            <person name="Schmutz J."/>
            <person name="Larimer F."/>
            <person name="Land M."/>
            <person name="Hauser L."/>
            <person name="Kyrpides N."/>
            <person name="Kim E."/>
            <person name="Richardson P."/>
        </authorList>
    </citation>
    <scope>NUCLEOTIDE SEQUENCE [LARGE SCALE GENOMIC DNA]</scope>
    <source>
        <strain>ATCC BAA-1226 / DSM 17306 / VKM B-2378 / K5</strain>
    </source>
</reference>
<gene>
    <name evidence="1" type="primary">gpsA</name>
    <name type="ordered locus">Pcryo_1096</name>
</gene>
<proteinExistence type="inferred from homology"/>
<sequence>MISANDKSTDTNVDSTQAEQKIAEKQNKLLSGIIERATKSSLGRKKLNPSVVESAVAKKMEEIHKNPTKLRLVVLGGGSFGTAMANLAARNGCDTTLWVRNKRTVKAMAKSQMNKKYLPGYKLDDRLKYSHELQAAVKDTDIIFIAVPGLAFRETLKSIAPFISGQSIVSLTKGMEKDTFSLMSDIIKDELPEVNFGVMSGPNLAIEIMKNMPSATVIASESEPLRHAVQAALHSAFFRVFASDDIRGVELGGALKNIYAIAMGMAAAYEVGENTKAMILTRGLAEMSRFGVHAGANPLTFLGLSGVGDLYATCSSELSRNYRIGNMLGRGMTIDAAVKKLGQTAEGVNTIQQVHEKATKEGIYMPITHALYAVIYEDKAALGVALHLMEAGFRSDVEFVMEHDHSNASLTAQMQTANSQSKEDKSKQGNK</sequence>